<reference key="1">
    <citation type="journal article" date="2006" name="Genome Biol.">
        <title>Genomic analysis reveals that Pseudomonas aeruginosa virulence is combinatorial.</title>
        <authorList>
            <person name="Lee D.G."/>
            <person name="Urbach J.M."/>
            <person name="Wu G."/>
            <person name="Liberati N.T."/>
            <person name="Feinbaum R.L."/>
            <person name="Miyata S."/>
            <person name="Diggins L.T."/>
            <person name="He J."/>
            <person name="Saucier M."/>
            <person name="Deziel E."/>
            <person name="Friedman L."/>
            <person name="Li L."/>
            <person name="Grills G."/>
            <person name="Montgomery K."/>
            <person name="Kucherlapati R."/>
            <person name="Rahme L.G."/>
            <person name="Ausubel F.M."/>
        </authorList>
    </citation>
    <scope>NUCLEOTIDE SEQUENCE [LARGE SCALE GENOMIC DNA]</scope>
    <source>
        <strain>UCBPP-PA14</strain>
    </source>
</reference>
<reference key="2">
    <citation type="journal article" date="2014" name="Anal. Bioanal. Chem.">
        <title>Potential of liquid-isoelectric-focusing protein fractionation to improve phosphoprotein characterization of Pseudomonas aeruginosa PA14.</title>
        <authorList>
            <person name="Ouidir T."/>
            <person name="Jarnier F."/>
            <person name="Cosette P."/>
            <person name="Jouenne T."/>
            <person name="Hardouin J."/>
        </authorList>
    </citation>
    <scope>IDENTIFICATION BY MASS SPECTROMETRY</scope>
    <scope>PHOSPHORYLATION AT TYR-77 AND TYR-88</scope>
    <source>
        <strain>UCBPP-PA14</strain>
    </source>
</reference>
<name>EFTU_PSEAB</name>
<feature type="chain" id="PRO_0000337471" description="Elongation factor Tu">
    <location>
        <begin position="1"/>
        <end position="397"/>
    </location>
</feature>
<feature type="domain" description="tr-type G">
    <location>
        <begin position="10"/>
        <end position="207"/>
    </location>
</feature>
<feature type="region of interest" description="G1" evidence="1">
    <location>
        <begin position="19"/>
        <end position="26"/>
    </location>
</feature>
<feature type="region of interest" description="G2" evidence="1">
    <location>
        <begin position="60"/>
        <end position="64"/>
    </location>
</feature>
<feature type="region of interest" description="G3" evidence="1">
    <location>
        <begin position="81"/>
        <end position="84"/>
    </location>
</feature>
<feature type="region of interest" description="G4" evidence="1">
    <location>
        <begin position="136"/>
        <end position="139"/>
    </location>
</feature>
<feature type="region of interest" description="G5" evidence="1">
    <location>
        <begin position="174"/>
        <end position="176"/>
    </location>
</feature>
<feature type="binding site" evidence="2">
    <location>
        <begin position="19"/>
        <end position="26"/>
    </location>
    <ligand>
        <name>GTP</name>
        <dbReference type="ChEBI" id="CHEBI:37565"/>
    </ligand>
</feature>
<feature type="binding site" evidence="2">
    <location>
        <position position="26"/>
    </location>
    <ligand>
        <name>Mg(2+)</name>
        <dbReference type="ChEBI" id="CHEBI:18420"/>
    </ligand>
</feature>
<feature type="binding site" evidence="2">
    <location>
        <begin position="81"/>
        <end position="85"/>
    </location>
    <ligand>
        <name>GTP</name>
        <dbReference type="ChEBI" id="CHEBI:37565"/>
    </ligand>
</feature>
<feature type="binding site" evidence="2">
    <location>
        <begin position="136"/>
        <end position="139"/>
    </location>
    <ligand>
        <name>GTP</name>
        <dbReference type="ChEBI" id="CHEBI:37565"/>
    </ligand>
</feature>
<feature type="modified residue" description="Phosphotyrosine" evidence="3">
    <location>
        <position position="77"/>
    </location>
</feature>
<feature type="modified residue" description="Phosphotyrosine" evidence="3">
    <location>
        <position position="88"/>
    </location>
</feature>
<keyword id="KW-0963">Cytoplasm</keyword>
<keyword id="KW-0251">Elongation factor</keyword>
<keyword id="KW-0342">GTP-binding</keyword>
<keyword id="KW-0378">Hydrolase</keyword>
<keyword id="KW-0460">Magnesium</keyword>
<keyword id="KW-0479">Metal-binding</keyword>
<keyword id="KW-0547">Nucleotide-binding</keyword>
<keyword id="KW-0597">Phosphoprotein</keyword>
<keyword id="KW-0648">Protein biosynthesis</keyword>
<protein>
    <recommendedName>
        <fullName evidence="2">Elongation factor Tu</fullName>
        <shortName evidence="2">EF-Tu</shortName>
        <ecNumber evidence="2">3.6.5.3</ecNumber>
    </recommendedName>
</protein>
<evidence type="ECO:0000250" key="1"/>
<evidence type="ECO:0000255" key="2">
    <source>
        <dbReference type="HAMAP-Rule" id="MF_00118"/>
    </source>
</evidence>
<evidence type="ECO:0000269" key="3">
    <source>
    </source>
</evidence>
<gene>
    <name evidence="2" type="primary">tuf1</name>
    <name type="synonym">tufB</name>
    <name type="ordered locus">PA14_08680</name>
</gene>
<gene>
    <name evidence="2" type="primary">tuf2</name>
    <name type="synonym">tufA</name>
    <name type="ordered locus">PA14_08830</name>
</gene>
<accession>Q02T82</accession>
<proteinExistence type="evidence at protein level"/>
<organism>
    <name type="scientific">Pseudomonas aeruginosa (strain UCBPP-PA14)</name>
    <dbReference type="NCBI Taxonomy" id="208963"/>
    <lineage>
        <taxon>Bacteria</taxon>
        <taxon>Pseudomonadati</taxon>
        <taxon>Pseudomonadota</taxon>
        <taxon>Gammaproteobacteria</taxon>
        <taxon>Pseudomonadales</taxon>
        <taxon>Pseudomonadaceae</taxon>
        <taxon>Pseudomonas</taxon>
    </lineage>
</organism>
<sequence>MAKEKFERNKPHVNVGTIGHVDHGKTTLTAALTKVCSDTWGGSARAFDQIDNAPEEKARGITINTSHVEYDSAVRHYAHVDCPGHADYVKNMITGAAQMDGAILVCSAADGPMPQTREHILLSRQVGVPYIVVFLNKADMVDDAELLELVEMEVRDLLNTYDFPGDDTPIIIGSALMALEGKDDNGIGVSAVQKLVETLDSYIPEPVRAIDQPFLMPIEDVFSISGRGTVVTGRVERGIIKVQEEVEIVGIKATTKTTCTGVEMFRKLLDEGRAGENVGILLRGTKREDVERGQVLAKPGTIKPHTKFECEVYVLSKEEGGRHTPFFKGYRPQFYFRTTDVTGNCELPEGVEMVMPGDNIKMVVTLIAPIAMEDGLRFAIREGGRTVGAGVVAKIIE</sequence>
<dbReference type="EC" id="3.6.5.3" evidence="2"/>
<dbReference type="EMBL" id="CP000438">
    <property type="protein sequence ID" value="ABJ13536.1"/>
    <property type="molecule type" value="Genomic_DNA"/>
</dbReference>
<dbReference type="EMBL" id="CP000438">
    <property type="protein sequence ID" value="ABJ13547.1"/>
    <property type="molecule type" value="Genomic_DNA"/>
</dbReference>
<dbReference type="SMR" id="Q02T82"/>
<dbReference type="iPTMnet" id="Q02T82"/>
<dbReference type="KEGG" id="pau:PA14_08680"/>
<dbReference type="KEGG" id="pau:PA14_08830"/>
<dbReference type="HOGENOM" id="CLU_007265_0_0_6"/>
<dbReference type="BioCyc" id="PAER208963:G1G74-721-MONOMER"/>
<dbReference type="BioCyc" id="PAER208963:G1G74-734-MONOMER"/>
<dbReference type="Proteomes" id="UP000000653">
    <property type="component" value="Chromosome"/>
</dbReference>
<dbReference type="GO" id="GO:0005829">
    <property type="term" value="C:cytosol"/>
    <property type="evidence" value="ECO:0007669"/>
    <property type="project" value="TreeGrafter"/>
</dbReference>
<dbReference type="GO" id="GO:0005525">
    <property type="term" value="F:GTP binding"/>
    <property type="evidence" value="ECO:0007669"/>
    <property type="project" value="UniProtKB-UniRule"/>
</dbReference>
<dbReference type="GO" id="GO:0003924">
    <property type="term" value="F:GTPase activity"/>
    <property type="evidence" value="ECO:0007669"/>
    <property type="project" value="InterPro"/>
</dbReference>
<dbReference type="GO" id="GO:0097216">
    <property type="term" value="F:guanosine tetraphosphate binding"/>
    <property type="evidence" value="ECO:0007669"/>
    <property type="project" value="UniProtKB-ARBA"/>
</dbReference>
<dbReference type="GO" id="GO:0003746">
    <property type="term" value="F:translation elongation factor activity"/>
    <property type="evidence" value="ECO:0007669"/>
    <property type="project" value="UniProtKB-UniRule"/>
</dbReference>
<dbReference type="CDD" id="cd01884">
    <property type="entry name" value="EF_Tu"/>
    <property type="match status" value="1"/>
</dbReference>
<dbReference type="CDD" id="cd03697">
    <property type="entry name" value="EFTU_II"/>
    <property type="match status" value="1"/>
</dbReference>
<dbReference type="CDD" id="cd03707">
    <property type="entry name" value="EFTU_III"/>
    <property type="match status" value="1"/>
</dbReference>
<dbReference type="FunFam" id="2.40.30.10:FF:000001">
    <property type="entry name" value="Elongation factor Tu"/>
    <property type="match status" value="1"/>
</dbReference>
<dbReference type="FunFam" id="3.40.50.300:FF:000003">
    <property type="entry name" value="Elongation factor Tu"/>
    <property type="match status" value="1"/>
</dbReference>
<dbReference type="Gene3D" id="3.40.50.300">
    <property type="entry name" value="P-loop containing nucleotide triphosphate hydrolases"/>
    <property type="match status" value="1"/>
</dbReference>
<dbReference type="Gene3D" id="2.40.30.10">
    <property type="entry name" value="Translation factors"/>
    <property type="match status" value="2"/>
</dbReference>
<dbReference type="HAMAP" id="MF_00118_B">
    <property type="entry name" value="EF_Tu_B"/>
    <property type="match status" value="1"/>
</dbReference>
<dbReference type="InterPro" id="IPR041709">
    <property type="entry name" value="EF-Tu_GTP-bd"/>
</dbReference>
<dbReference type="InterPro" id="IPR050055">
    <property type="entry name" value="EF-Tu_GTPase"/>
</dbReference>
<dbReference type="InterPro" id="IPR004161">
    <property type="entry name" value="EFTu-like_2"/>
</dbReference>
<dbReference type="InterPro" id="IPR033720">
    <property type="entry name" value="EFTU_2"/>
</dbReference>
<dbReference type="InterPro" id="IPR031157">
    <property type="entry name" value="G_TR_CS"/>
</dbReference>
<dbReference type="InterPro" id="IPR027417">
    <property type="entry name" value="P-loop_NTPase"/>
</dbReference>
<dbReference type="InterPro" id="IPR005225">
    <property type="entry name" value="Small_GTP-bd"/>
</dbReference>
<dbReference type="InterPro" id="IPR000795">
    <property type="entry name" value="T_Tr_GTP-bd_dom"/>
</dbReference>
<dbReference type="InterPro" id="IPR009000">
    <property type="entry name" value="Transl_B-barrel_sf"/>
</dbReference>
<dbReference type="InterPro" id="IPR009001">
    <property type="entry name" value="Transl_elong_EF1A/Init_IF2_C"/>
</dbReference>
<dbReference type="InterPro" id="IPR004541">
    <property type="entry name" value="Transl_elong_EFTu/EF1A_bac/org"/>
</dbReference>
<dbReference type="InterPro" id="IPR004160">
    <property type="entry name" value="Transl_elong_EFTu/EF1A_C"/>
</dbReference>
<dbReference type="NCBIfam" id="TIGR00485">
    <property type="entry name" value="EF-Tu"/>
    <property type="match status" value="1"/>
</dbReference>
<dbReference type="NCBIfam" id="NF000766">
    <property type="entry name" value="PRK00049.1"/>
    <property type="match status" value="1"/>
</dbReference>
<dbReference type="NCBIfam" id="NF009372">
    <property type="entry name" value="PRK12735.1"/>
    <property type="match status" value="1"/>
</dbReference>
<dbReference type="NCBIfam" id="NF009373">
    <property type="entry name" value="PRK12736.1"/>
    <property type="match status" value="1"/>
</dbReference>
<dbReference type="NCBIfam" id="TIGR00231">
    <property type="entry name" value="small_GTP"/>
    <property type="match status" value="1"/>
</dbReference>
<dbReference type="PANTHER" id="PTHR43721:SF22">
    <property type="entry name" value="ELONGATION FACTOR TU, MITOCHONDRIAL"/>
    <property type="match status" value="1"/>
</dbReference>
<dbReference type="PANTHER" id="PTHR43721">
    <property type="entry name" value="ELONGATION FACTOR TU-RELATED"/>
    <property type="match status" value="1"/>
</dbReference>
<dbReference type="Pfam" id="PF00009">
    <property type="entry name" value="GTP_EFTU"/>
    <property type="match status" value="1"/>
</dbReference>
<dbReference type="Pfam" id="PF03144">
    <property type="entry name" value="GTP_EFTU_D2"/>
    <property type="match status" value="1"/>
</dbReference>
<dbReference type="Pfam" id="PF03143">
    <property type="entry name" value="GTP_EFTU_D3"/>
    <property type="match status" value="1"/>
</dbReference>
<dbReference type="PRINTS" id="PR00315">
    <property type="entry name" value="ELONGATNFCT"/>
</dbReference>
<dbReference type="SUPFAM" id="SSF50465">
    <property type="entry name" value="EF-Tu/eEF-1alpha/eIF2-gamma C-terminal domain"/>
    <property type="match status" value="1"/>
</dbReference>
<dbReference type="SUPFAM" id="SSF52540">
    <property type="entry name" value="P-loop containing nucleoside triphosphate hydrolases"/>
    <property type="match status" value="1"/>
</dbReference>
<dbReference type="SUPFAM" id="SSF50447">
    <property type="entry name" value="Translation proteins"/>
    <property type="match status" value="1"/>
</dbReference>
<dbReference type="PROSITE" id="PS00301">
    <property type="entry name" value="G_TR_1"/>
    <property type="match status" value="1"/>
</dbReference>
<dbReference type="PROSITE" id="PS51722">
    <property type="entry name" value="G_TR_2"/>
    <property type="match status" value="1"/>
</dbReference>
<comment type="function">
    <text evidence="2">GTP hydrolase that promotes the GTP-dependent binding of aminoacyl-tRNA to the A-site of ribosomes during protein biosynthesis.</text>
</comment>
<comment type="catalytic activity">
    <reaction evidence="2">
        <text>GTP + H2O = GDP + phosphate + H(+)</text>
        <dbReference type="Rhea" id="RHEA:19669"/>
        <dbReference type="ChEBI" id="CHEBI:15377"/>
        <dbReference type="ChEBI" id="CHEBI:15378"/>
        <dbReference type="ChEBI" id="CHEBI:37565"/>
        <dbReference type="ChEBI" id="CHEBI:43474"/>
        <dbReference type="ChEBI" id="CHEBI:58189"/>
        <dbReference type="EC" id="3.6.5.3"/>
    </reaction>
    <physiologicalReaction direction="left-to-right" evidence="2">
        <dbReference type="Rhea" id="RHEA:19670"/>
    </physiologicalReaction>
</comment>
<comment type="subunit">
    <text evidence="2">Monomer.</text>
</comment>
<comment type="subcellular location">
    <subcellularLocation>
        <location evidence="2">Cytoplasm</location>
    </subcellularLocation>
</comment>
<comment type="similarity">
    <text evidence="2">Belongs to the TRAFAC class translation factor GTPase superfamily. Classic translation factor GTPase family. EF-Tu/EF-1A subfamily.</text>
</comment>